<proteinExistence type="inferred from homology"/>
<feature type="chain" id="PRO_0000084248" description="IMP-specific 5'-nucleotidase 1">
    <location>
        <begin position="1"/>
        <end position="460"/>
    </location>
</feature>
<feature type="active site" description="Nucleophile" evidence="1">
    <location>
        <position position="172"/>
    </location>
</feature>
<feature type="active site" description="Proton donor" evidence="1">
    <location>
        <position position="174"/>
    </location>
</feature>
<feature type="binding site" evidence="1">
    <location>
        <position position="112"/>
    </location>
    <ligand>
        <name>ATP</name>
        <dbReference type="ChEBI" id="CHEBI:30616"/>
        <note>allosteric activator</note>
    </ligand>
</feature>
<feature type="binding site" evidence="1">
    <location>
        <position position="172"/>
    </location>
    <ligand>
        <name>IMP</name>
        <dbReference type="ChEBI" id="CHEBI:58053"/>
    </ligand>
</feature>
<feature type="binding site" evidence="1">
    <location>
        <position position="172"/>
    </location>
    <ligand>
        <name>Mg(2+)</name>
        <dbReference type="ChEBI" id="CHEBI:18420"/>
    </ligand>
</feature>
<feature type="binding site" evidence="1">
    <location>
        <position position="174"/>
    </location>
    <ligand>
        <name>IMP</name>
        <dbReference type="ChEBI" id="CHEBI:58053"/>
    </ligand>
</feature>
<feature type="binding site" evidence="1">
    <location>
        <position position="174"/>
    </location>
    <ligand>
        <name>Mg(2+)</name>
        <dbReference type="ChEBI" id="CHEBI:18420"/>
    </ligand>
</feature>
<feature type="binding site" evidence="1">
    <location>
        <position position="180"/>
    </location>
    <ligand>
        <name>IMP</name>
        <dbReference type="ChEBI" id="CHEBI:58053"/>
    </ligand>
</feature>
<feature type="binding site" evidence="1">
    <location>
        <position position="208"/>
    </location>
    <ligand>
        <name>IMP</name>
        <dbReference type="ChEBI" id="CHEBI:58053"/>
    </ligand>
</feature>
<feature type="binding site" evidence="1">
    <location>
        <position position="379"/>
    </location>
    <ligand>
        <name>IMP</name>
        <dbReference type="ChEBI" id="CHEBI:58053"/>
    </ligand>
</feature>
<feature type="binding site" evidence="1">
    <location>
        <position position="387"/>
    </location>
    <ligand>
        <name>IMP</name>
        <dbReference type="ChEBI" id="CHEBI:58053"/>
    </ligand>
</feature>
<feature type="binding site" evidence="1">
    <location>
        <position position="420"/>
    </location>
    <ligand>
        <name>Mg(2+)</name>
        <dbReference type="ChEBI" id="CHEBI:18420"/>
    </ligand>
</feature>
<comment type="function">
    <text evidence="2">IMP-specific 5'-nucleotidase involved in IMP (inositol monophosphate) degradation.</text>
</comment>
<comment type="catalytic activity">
    <reaction evidence="2">
        <text>IMP + H2O = inosine + phosphate</text>
        <dbReference type="Rhea" id="RHEA:27718"/>
        <dbReference type="ChEBI" id="CHEBI:15377"/>
        <dbReference type="ChEBI" id="CHEBI:17596"/>
        <dbReference type="ChEBI" id="CHEBI:43474"/>
        <dbReference type="ChEBI" id="CHEBI:58053"/>
        <dbReference type="EC" id="3.1.3.99"/>
    </reaction>
</comment>
<comment type="cofactor">
    <cofactor evidence="2">
        <name>Mg(2+)</name>
        <dbReference type="ChEBI" id="CHEBI:18420"/>
    </cofactor>
</comment>
<comment type="activity regulation">
    <text evidence="1 2">Allosterically activated by ATP (By similarity). ATP binding is a prerequisite to magnesium and substrate binding. ATP binds to 2 of the subunits in the homotetramer inducing a closure of these 2 subunits and the release of the C-terminal loop, thereby activating the enzyme (By similarity).</text>
</comment>
<comment type="subunit">
    <text evidence="2">Homotetramer.</text>
</comment>
<comment type="similarity">
    <text evidence="3">Belongs to the ISN1 family.</text>
</comment>
<evidence type="ECO:0000250" key="1">
    <source>
        <dbReference type="UniProtKB" id="A0A144A134"/>
    </source>
</evidence>
<evidence type="ECO:0000250" key="2">
    <source>
        <dbReference type="UniProtKB" id="Q99312"/>
    </source>
</evidence>
<evidence type="ECO:0000305" key="3"/>
<protein>
    <recommendedName>
        <fullName>IMP-specific 5'-nucleotidase 1</fullName>
        <ecNumber evidence="2">3.1.3.99</ecNumber>
    </recommendedName>
</protein>
<name>ISN1_CANAL</name>
<sequence>MTSRYRVEYALKSHRRDEFIEWIKGLLATPFVLHADDSHADAQIVAENCQARYYEIFKDVESLVKQTIFLDELNELDPKKKSISRLRTLVPSLGKFFTELPLADAFLLEDERRAISKRRLVSPSFNDVRMILNTAQIMALTNIYKQTENNINGISGKNQQQQQQKLKLITFDGDVTLYEDGKSLDENSEVVQRLVKLLSLGLYVGVVTAAGYPRQSGAEKYYERLKGLIDHLNSNHCTLKTYQKENLLVMGAESNYLFRYNNEMKGLKFIDDEEWFLPQVKNWNIGKINYIMDTLYKHLIYLRNNFNLEDSTTIIKKERSVGIIPNSGCRILREQLEEMVLSCSRKLNTILTSSSNFADSTEALCVDDIKVCAFNGGSDVWVDIGDKALGVESLQKYICHDETVDHVCPIGKSESLHIGDQFASLGANDFKARLSACTVWIASPRETVAILDDLIDFIEG</sequence>
<keyword id="KW-0067">ATP-binding</keyword>
<keyword id="KW-0378">Hydrolase</keyword>
<keyword id="KW-0460">Magnesium</keyword>
<keyword id="KW-0479">Metal-binding</keyword>
<keyword id="KW-0546">Nucleotide metabolism</keyword>
<keyword id="KW-0547">Nucleotide-binding</keyword>
<keyword id="KW-1185">Reference proteome</keyword>
<gene>
    <name type="primary">ISN1</name>
    <name type="ordered locus">CAALFM_C101650WA</name>
    <name type="ORF">CaO19.10863</name>
    <name type="ORF">CaO19.3355</name>
</gene>
<accession>Q5A8X9</accession>
<accession>A0A1D8PCK5</accession>
<reference key="1">
    <citation type="journal article" date="2004" name="Proc. Natl. Acad. Sci. U.S.A.">
        <title>The diploid genome sequence of Candida albicans.</title>
        <authorList>
            <person name="Jones T."/>
            <person name="Federspiel N.A."/>
            <person name="Chibana H."/>
            <person name="Dungan J."/>
            <person name="Kalman S."/>
            <person name="Magee B.B."/>
            <person name="Newport G."/>
            <person name="Thorstenson Y.R."/>
            <person name="Agabian N."/>
            <person name="Magee P.T."/>
            <person name="Davis R.W."/>
            <person name="Scherer S."/>
        </authorList>
    </citation>
    <scope>NUCLEOTIDE SEQUENCE [LARGE SCALE GENOMIC DNA]</scope>
    <source>
        <strain>SC5314 / ATCC MYA-2876</strain>
    </source>
</reference>
<reference key="2">
    <citation type="journal article" date="2007" name="Genome Biol.">
        <title>Assembly of the Candida albicans genome into sixteen supercontigs aligned on the eight chromosomes.</title>
        <authorList>
            <person name="van het Hoog M."/>
            <person name="Rast T.J."/>
            <person name="Martchenko M."/>
            <person name="Grindle S."/>
            <person name="Dignard D."/>
            <person name="Hogues H."/>
            <person name="Cuomo C."/>
            <person name="Berriman M."/>
            <person name="Scherer S."/>
            <person name="Magee B.B."/>
            <person name="Whiteway M."/>
            <person name="Chibana H."/>
            <person name="Nantel A."/>
            <person name="Magee P.T."/>
        </authorList>
    </citation>
    <scope>GENOME REANNOTATION</scope>
    <source>
        <strain>SC5314 / ATCC MYA-2876</strain>
    </source>
</reference>
<reference key="3">
    <citation type="journal article" date="2013" name="Genome Biol.">
        <title>Assembly of a phased diploid Candida albicans genome facilitates allele-specific measurements and provides a simple model for repeat and indel structure.</title>
        <authorList>
            <person name="Muzzey D."/>
            <person name="Schwartz K."/>
            <person name="Weissman J.S."/>
            <person name="Sherlock G."/>
        </authorList>
    </citation>
    <scope>NUCLEOTIDE SEQUENCE [LARGE SCALE GENOMIC DNA]</scope>
    <scope>GENOME REANNOTATION</scope>
    <source>
        <strain>SC5314 / ATCC MYA-2876</strain>
    </source>
</reference>
<organism>
    <name type="scientific">Candida albicans (strain SC5314 / ATCC MYA-2876)</name>
    <name type="common">Yeast</name>
    <dbReference type="NCBI Taxonomy" id="237561"/>
    <lineage>
        <taxon>Eukaryota</taxon>
        <taxon>Fungi</taxon>
        <taxon>Dikarya</taxon>
        <taxon>Ascomycota</taxon>
        <taxon>Saccharomycotina</taxon>
        <taxon>Pichiomycetes</taxon>
        <taxon>Debaryomycetaceae</taxon>
        <taxon>Candida/Lodderomyces clade</taxon>
        <taxon>Candida</taxon>
    </lineage>
</organism>
<dbReference type="EC" id="3.1.3.99" evidence="2"/>
<dbReference type="EMBL" id="CP017623">
    <property type="protein sequence ID" value="AOW25855.1"/>
    <property type="molecule type" value="Genomic_DNA"/>
</dbReference>
<dbReference type="RefSeq" id="XP_718178.1">
    <property type="nucleotide sequence ID" value="XM_713085.2"/>
</dbReference>
<dbReference type="SMR" id="Q5A8X9"/>
<dbReference type="FunCoup" id="Q5A8X9">
    <property type="interactions" value="100"/>
</dbReference>
<dbReference type="STRING" id="237561.Q5A8X9"/>
<dbReference type="EnsemblFungi" id="C1_01650W_A-T">
    <property type="protein sequence ID" value="C1_01650W_A-T-p1"/>
    <property type="gene ID" value="C1_01650W_A"/>
</dbReference>
<dbReference type="GeneID" id="3640196"/>
<dbReference type="KEGG" id="cal:CAALFM_C101650WA"/>
<dbReference type="CGD" id="CAL0000179159">
    <property type="gene designation" value="ISN1"/>
</dbReference>
<dbReference type="VEuPathDB" id="FungiDB:C1_01650W_A"/>
<dbReference type="eggNOG" id="ENOG502QR24">
    <property type="taxonomic scope" value="Eukaryota"/>
</dbReference>
<dbReference type="HOGENOM" id="CLU_031816_1_0_1"/>
<dbReference type="InParanoid" id="Q5A8X9"/>
<dbReference type="OrthoDB" id="185373at2759"/>
<dbReference type="PRO" id="PR:Q5A8X9"/>
<dbReference type="Proteomes" id="UP000000559">
    <property type="component" value="Chromosome 1"/>
</dbReference>
<dbReference type="GO" id="GO:0005524">
    <property type="term" value="F:ATP binding"/>
    <property type="evidence" value="ECO:0007669"/>
    <property type="project" value="UniProtKB-KW"/>
</dbReference>
<dbReference type="GO" id="GO:0050483">
    <property type="term" value="F:IMP 5'-nucleotidase activity"/>
    <property type="evidence" value="ECO:0000318"/>
    <property type="project" value="GO_Central"/>
</dbReference>
<dbReference type="GO" id="GO:0000287">
    <property type="term" value="F:magnesium ion binding"/>
    <property type="evidence" value="ECO:0007669"/>
    <property type="project" value="InterPro"/>
</dbReference>
<dbReference type="GO" id="GO:0006190">
    <property type="term" value="P:inosine salvage"/>
    <property type="evidence" value="ECO:0000318"/>
    <property type="project" value="GO_Central"/>
</dbReference>
<dbReference type="GO" id="GO:0071590">
    <property type="term" value="P:nicotinamide riboside biosynthetic process"/>
    <property type="evidence" value="ECO:0000318"/>
    <property type="project" value="GO_Central"/>
</dbReference>
<dbReference type="GO" id="GO:0071592">
    <property type="term" value="P:nicotinic acid riboside biosynthetic process"/>
    <property type="evidence" value="ECO:0000318"/>
    <property type="project" value="GO_Central"/>
</dbReference>
<dbReference type="GO" id="GO:0009117">
    <property type="term" value="P:nucleotide metabolic process"/>
    <property type="evidence" value="ECO:0007669"/>
    <property type="project" value="UniProtKB-KW"/>
</dbReference>
<dbReference type="InterPro" id="IPR036412">
    <property type="entry name" value="HAD-like_sf"/>
</dbReference>
<dbReference type="InterPro" id="IPR009453">
    <property type="entry name" value="ISN1"/>
</dbReference>
<dbReference type="PANTHER" id="PTHR28213">
    <property type="entry name" value="IMP-SPECIFIC 5'-NUCLEOTIDASE 1"/>
    <property type="match status" value="1"/>
</dbReference>
<dbReference type="PANTHER" id="PTHR28213:SF1">
    <property type="entry name" value="IMP-SPECIFIC 5'-NUCLEOTIDASE 1"/>
    <property type="match status" value="1"/>
</dbReference>
<dbReference type="Pfam" id="PF06437">
    <property type="entry name" value="ISN1"/>
    <property type="match status" value="1"/>
</dbReference>
<dbReference type="PIRSF" id="PIRSF028836">
    <property type="entry name" value="ISN1"/>
    <property type="match status" value="1"/>
</dbReference>
<dbReference type="SUPFAM" id="SSF56784">
    <property type="entry name" value="HAD-like"/>
    <property type="match status" value="1"/>
</dbReference>